<name>Y4374_ARATH</name>
<protein>
    <recommendedName>
        <fullName>Probable inactive receptor kinase At4g23740</fullName>
    </recommendedName>
</protein>
<comment type="interaction">
    <interactant intactId="EBI-16912451">
        <id>Q9SUQ3</id>
    </interactant>
    <interactant intactId="EBI-20652336">
        <id>A0A178WLG7</id>
        <label>At1g51790</label>
    </interactant>
    <organismsDiffer>false</organismsDiffer>
    <experiments>2</experiments>
</comment>
<comment type="interaction">
    <interactant intactId="EBI-16912451">
        <id>Q9SUQ3</id>
    </interactant>
    <interactant intactId="EBI-20657656">
        <id>C0LGH8</id>
        <label>At1g63430</label>
    </interactant>
    <organismsDiffer>false</organismsDiffer>
    <experiments>3</experiments>
</comment>
<comment type="interaction">
    <interactant intactId="EBI-16912451">
        <id>Q9SUQ3</id>
    </interactant>
    <interactant intactId="EBI-20654480">
        <id>C0LGR6</id>
        <label>At4g29180</label>
    </interactant>
    <organismsDiffer>false</organismsDiffer>
    <experiments>2</experiments>
</comment>
<comment type="interaction">
    <interactant intactId="EBI-16912451">
        <id>Q9SUQ3</id>
    </interactant>
    <interactant intactId="EBI-20661274">
        <id>A0A178UAF6</id>
        <label>AXX17_At5g67350</label>
    </interactant>
    <organismsDiffer>false</organismsDiffer>
    <experiments>2</experiments>
</comment>
<comment type="interaction">
    <interactant intactId="EBI-16912451">
        <id>Q9SUQ3</id>
    </interactant>
    <interactant intactId="EBI-20652612">
        <id>Q9FZ59</id>
        <label>PEPR2</label>
    </interactant>
    <organismsDiffer>false</organismsDiffer>
    <experiments>2</experiments>
</comment>
<comment type="interaction">
    <interactant intactId="EBI-16912451">
        <id>Q9SUQ3</id>
    </interactant>
    <interactant intactId="EBI-16940204">
        <id>Q9S7I6</id>
        <label>RPK2</label>
    </interactant>
    <organismsDiffer>false</organismsDiffer>
    <experiments>4</experiments>
</comment>
<comment type="interaction">
    <interactant intactId="EBI-16912451">
        <id>Q9SUQ3</id>
    </interactant>
    <interactant intactId="EBI-15730235">
        <id>Q9FII5</id>
        <label>TDR</label>
    </interactant>
    <organismsDiffer>false</organismsDiffer>
    <experiments>3</experiments>
</comment>
<comment type="interaction">
    <interactant intactId="EBI-16912451">
        <id>Q9SUQ3</id>
    </interactant>
    <interactant intactId="EBI-2023970">
        <id>P43298</id>
        <label>TMK1</label>
    </interactant>
    <organismsDiffer>false</organismsDiffer>
    <experiments>3</experiments>
</comment>
<comment type="subcellular location">
    <subcellularLocation>
        <location evidence="7">Membrane</location>
        <topology evidence="7">Single-pass membrane protein</topology>
    </subcellularLocation>
</comment>
<comment type="domain">
    <text>The protein kinase domain is predicted to be catalytically inactive.</text>
</comment>
<comment type="similarity">
    <text evidence="7">Belongs to the protein kinase superfamily.</text>
</comment>
<dbReference type="EMBL" id="AL035394">
    <property type="protein sequence ID" value="CAA23040.1"/>
    <property type="molecule type" value="Genomic_DNA"/>
</dbReference>
<dbReference type="EMBL" id="AL161560">
    <property type="protein sequence ID" value="CAB81292.1"/>
    <property type="molecule type" value="Genomic_DNA"/>
</dbReference>
<dbReference type="EMBL" id="CP002687">
    <property type="protein sequence ID" value="AEE84800.1"/>
    <property type="molecule type" value="Genomic_DNA"/>
</dbReference>
<dbReference type="EMBL" id="CP002687">
    <property type="protein sequence ID" value="ANM66660.1"/>
    <property type="molecule type" value="Genomic_DNA"/>
</dbReference>
<dbReference type="EMBL" id="BT008579">
    <property type="protein sequence ID" value="AAP40406.1"/>
    <property type="molecule type" value="mRNA"/>
</dbReference>
<dbReference type="EMBL" id="AK118364">
    <property type="protein sequence ID" value="BAC42978.1"/>
    <property type="molecule type" value="mRNA"/>
</dbReference>
<dbReference type="PIR" id="T05606">
    <property type="entry name" value="T05606"/>
</dbReference>
<dbReference type="RefSeq" id="NP_001328543.1">
    <property type="nucleotide sequence ID" value="NM_001341629.1"/>
</dbReference>
<dbReference type="RefSeq" id="NP_194105.1">
    <property type="nucleotide sequence ID" value="NM_118505.5"/>
</dbReference>
<dbReference type="SMR" id="Q9SUQ3"/>
<dbReference type="BioGRID" id="13763">
    <property type="interactions" value="74"/>
</dbReference>
<dbReference type="FunCoup" id="Q9SUQ3">
    <property type="interactions" value="1370"/>
</dbReference>
<dbReference type="IntAct" id="Q9SUQ3">
    <property type="interactions" value="75"/>
</dbReference>
<dbReference type="STRING" id="3702.Q9SUQ3"/>
<dbReference type="GlyGen" id="Q9SUQ3">
    <property type="glycosylation" value="1 site"/>
</dbReference>
<dbReference type="iPTMnet" id="Q9SUQ3"/>
<dbReference type="PaxDb" id="3702-AT4G23740.1"/>
<dbReference type="ProteomicsDB" id="242878"/>
<dbReference type="EnsemblPlants" id="AT4G23740.1">
    <property type="protein sequence ID" value="AT4G23740.1"/>
    <property type="gene ID" value="AT4G23740"/>
</dbReference>
<dbReference type="EnsemblPlants" id="AT4G23740.2">
    <property type="protein sequence ID" value="AT4G23740.2"/>
    <property type="gene ID" value="AT4G23740"/>
</dbReference>
<dbReference type="GeneID" id="828474"/>
<dbReference type="Gramene" id="AT4G23740.1">
    <property type="protein sequence ID" value="AT4G23740.1"/>
    <property type="gene ID" value="AT4G23740"/>
</dbReference>
<dbReference type="Gramene" id="AT4G23740.2">
    <property type="protein sequence ID" value="AT4G23740.2"/>
    <property type="gene ID" value="AT4G23740"/>
</dbReference>
<dbReference type="KEGG" id="ath:AT4G23740"/>
<dbReference type="Araport" id="AT4G23740"/>
<dbReference type="TAIR" id="AT4G23740"/>
<dbReference type="eggNOG" id="ENOG502QTFK">
    <property type="taxonomic scope" value="Eukaryota"/>
</dbReference>
<dbReference type="HOGENOM" id="CLU_000288_92_6_1"/>
<dbReference type="InParanoid" id="Q9SUQ3"/>
<dbReference type="OMA" id="FFEGCHY"/>
<dbReference type="OrthoDB" id="676979at2759"/>
<dbReference type="PhylomeDB" id="Q9SUQ3"/>
<dbReference type="PRO" id="PR:Q9SUQ3"/>
<dbReference type="Proteomes" id="UP000006548">
    <property type="component" value="Chromosome 4"/>
</dbReference>
<dbReference type="ExpressionAtlas" id="Q9SUQ3">
    <property type="expression patterns" value="baseline and differential"/>
</dbReference>
<dbReference type="GO" id="GO:0016020">
    <property type="term" value="C:membrane"/>
    <property type="evidence" value="ECO:0007669"/>
    <property type="project" value="UniProtKB-SubCell"/>
</dbReference>
<dbReference type="GO" id="GO:0005524">
    <property type="term" value="F:ATP binding"/>
    <property type="evidence" value="ECO:0007669"/>
    <property type="project" value="UniProtKB-KW"/>
</dbReference>
<dbReference type="GO" id="GO:0004672">
    <property type="term" value="F:protein kinase activity"/>
    <property type="evidence" value="ECO:0007669"/>
    <property type="project" value="InterPro"/>
</dbReference>
<dbReference type="FunFam" id="3.80.10.10:FF:000431">
    <property type="entry name" value="Leucine-rich repeat receptor-like protein kinase"/>
    <property type="match status" value="1"/>
</dbReference>
<dbReference type="FunFam" id="3.30.200.20:FF:000307">
    <property type="entry name" value="pollen receptor-like kinase 1"/>
    <property type="match status" value="1"/>
</dbReference>
<dbReference type="FunFam" id="1.10.510.10:FF:000095">
    <property type="entry name" value="protein STRUBBELIG-RECEPTOR FAMILY 8"/>
    <property type="match status" value="1"/>
</dbReference>
<dbReference type="Gene3D" id="3.30.200.20">
    <property type="entry name" value="Phosphorylase Kinase, domain 1"/>
    <property type="match status" value="1"/>
</dbReference>
<dbReference type="Gene3D" id="3.80.10.10">
    <property type="entry name" value="Ribonuclease Inhibitor"/>
    <property type="match status" value="2"/>
</dbReference>
<dbReference type="Gene3D" id="1.10.510.10">
    <property type="entry name" value="Transferase(Phosphotransferase) domain 1"/>
    <property type="match status" value="1"/>
</dbReference>
<dbReference type="InterPro" id="IPR050994">
    <property type="entry name" value="At_inactive_RLKs"/>
</dbReference>
<dbReference type="InterPro" id="IPR011009">
    <property type="entry name" value="Kinase-like_dom_sf"/>
</dbReference>
<dbReference type="InterPro" id="IPR001611">
    <property type="entry name" value="Leu-rich_rpt"/>
</dbReference>
<dbReference type="InterPro" id="IPR032675">
    <property type="entry name" value="LRR_dom_sf"/>
</dbReference>
<dbReference type="InterPro" id="IPR013210">
    <property type="entry name" value="LRR_N_plant-typ"/>
</dbReference>
<dbReference type="InterPro" id="IPR000719">
    <property type="entry name" value="Prot_kinase_dom"/>
</dbReference>
<dbReference type="InterPro" id="IPR017441">
    <property type="entry name" value="Protein_kinase_ATP_BS"/>
</dbReference>
<dbReference type="InterPro" id="IPR001245">
    <property type="entry name" value="Ser-Thr/Tyr_kinase_cat_dom"/>
</dbReference>
<dbReference type="PANTHER" id="PTHR48010:SF6">
    <property type="entry name" value="OS01G0223600 PROTEIN"/>
    <property type="match status" value="1"/>
</dbReference>
<dbReference type="PANTHER" id="PTHR48010">
    <property type="entry name" value="OS05G0588300 PROTEIN"/>
    <property type="match status" value="1"/>
</dbReference>
<dbReference type="Pfam" id="PF00560">
    <property type="entry name" value="LRR_1"/>
    <property type="match status" value="1"/>
</dbReference>
<dbReference type="Pfam" id="PF13855">
    <property type="entry name" value="LRR_8"/>
    <property type="match status" value="1"/>
</dbReference>
<dbReference type="Pfam" id="PF08263">
    <property type="entry name" value="LRRNT_2"/>
    <property type="match status" value="1"/>
</dbReference>
<dbReference type="Pfam" id="PF07714">
    <property type="entry name" value="PK_Tyr_Ser-Thr"/>
    <property type="match status" value="1"/>
</dbReference>
<dbReference type="SUPFAM" id="SSF52058">
    <property type="entry name" value="L domain-like"/>
    <property type="match status" value="1"/>
</dbReference>
<dbReference type="SUPFAM" id="SSF56112">
    <property type="entry name" value="Protein kinase-like (PK-like)"/>
    <property type="match status" value="1"/>
</dbReference>
<dbReference type="PROSITE" id="PS51450">
    <property type="entry name" value="LRR"/>
    <property type="match status" value="4"/>
</dbReference>
<dbReference type="PROSITE" id="PS00107">
    <property type="entry name" value="PROTEIN_KINASE_ATP"/>
    <property type="match status" value="1"/>
</dbReference>
<dbReference type="PROSITE" id="PS50011">
    <property type="entry name" value="PROTEIN_KINASE_DOM"/>
    <property type="match status" value="1"/>
</dbReference>
<organism>
    <name type="scientific">Arabidopsis thaliana</name>
    <name type="common">Mouse-ear cress</name>
    <dbReference type="NCBI Taxonomy" id="3702"/>
    <lineage>
        <taxon>Eukaryota</taxon>
        <taxon>Viridiplantae</taxon>
        <taxon>Streptophyta</taxon>
        <taxon>Embryophyta</taxon>
        <taxon>Tracheophyta</taxon>
        <taxon>Spermatophyta</taxon>
        <taxon>Magnoliopsida</taxon>
        <taxon>eudicotyledons</taxon>
        <taxon>Gunneridae</taxon>
        <taxon>Pentapetalae</taxon>
        <taxon>rosids</taxon>
        <taxon>malvids</taxon>
        <taxon>Brassicales</taxon>
        <taxon>Brassicaceae</taxon>
        <taxon>Camelineae</taxon>
        <taxon>Arabidopsis</taxon>
    </lineage>
</organism>
<sequence length="638" mass="70798">MEALRIYLWSLCLSLCLIIYGANSDPLEDKRALLEFLTIMQPTRSLNWNETSQVCNIWTGVTCNQDGSRIIAVRLPGVGLNGQIPPNTISRLSALRVLSLRSNLISGEFPKDFVELKDLAFLYLQDNNLSGPLPLDFSVWKNLTSVNLSNNGFNGTIPSSLSRLKRIQSLNLANNTLSGDIPDLSVLSSLQHIDLSNNYDLAGPIPDWLRRFPFSSYTGIDIIPPGGNYTLVTPPPPSEQTHQKPSKARFLGLSETVFLLIVIAVSIVVITALAFVLTVCYVRRKLRRGDGVISDNKLQKKGGMSPEKFVSRMEDVNNRLSFFEGCNYSFDLEDLLRASAEVLGKGTFGTTYKAVLEDATSVAVKRLKDVAAGKRDFEQQMEIIGGIKHENVVELKAYYYSKDEKLMVYDYFSRGSVASLLHGNRGENRIPLDWETRMKIAIGAAKGIARIHKENNGKLVHGNIKSSNIFLNSESNGCVSDLGLTAVMSPLAPPISRQAGYRAPEVTDTRKSSQLSDVYSFGVVLLELLTGKSPIHTTAGDEIIHLVRWVHSVVREEWTAEVFDIELLRYTNIEEEMVEMLQIAMSCVVKAADQRPKMSDLVRLIENVGNRRTSIEPEPELKPKSENGASETSTPSEI</sequence>
<keyword id="KW-0067">ATP-binding</keyword>
<keyword id="KW-0433">Leucine-rich repeat</keyword>
<keyword id="KW-0472">Membrane</keyword>
<keyword id="KW-0547">Nucleotide-binding</keyword>
<keyword id="KW-0597">Phosphoprotein</keyword>
<keyword id="KW-0675">Receptor</keyword>
<keyword id="KW-1185">Reference proteome</keyword>
<keyword id="KW-0677">Repeat</keyword>
<keyword id="KW-0732">Signal</keyword>
<keyword id="KW-0812">Transmembrane</keyword>
<keyword id="KW-1133">Transmembrane helix</keyword>
<evidence type="ECO:0000250" key="1">
    <source>
        <dbReference type="UniProtKB" id="Q94AG2"/>
    </source>
</evidence>
<evidence type="ECO:0000250" key="2">
    <source>
        <dbReference type="UniProtKB" id="Q94F62"/>
    </source>
</evidence>
<evidence type="ECO:0000250" key="3">
    <source>
        <dbReference type="UniProtKB" id="Q9LSI9"/>
    </source>
</evidence>
<evidence type="ECO:0000255" key="4"/>
<evidence type="ECO:0000255" key="5">
    <source>
        <dbReference type="PROSITE-ProRule" id="PRU00159"/>
    </source>
</evidence>
<evidence type="ECO:0000256" key="6">
    <source>
        <dbReference type="SAM" id="MobiDB-lite"/>
    </source>
</evidence>
<evidence type="ECO:0000305" key="7"/>
<accession>Q9SUQ3</accession>
<gene>
    <name type="ordered locus">At4g23740</name>
    <name type="ORF">F9D16.210</name>
</gene>
<feature type="signal peptide" evidence="4">
    <location>
        <begin position="1"/>
        <end position="24"/>
    </location>
</feature>
<feature type="chain" id="PRO_0000324841" description="Probable inactive receptor kinase At4g23740">
    <location>
        <begin position="25"/>
        <end position="638"/>
    </location>
</feature>
<feature type="transmembrane region" description="Helical" evidence="4">
    <location>
        <begin position="257"/>
        <end position="277"/>
    </location>
</feature>
<feature type="repeat" description="LRR 1">
    <location>
        <begin position="94"/>
        <end position="117"/>
    </location>
</feature>
<feature type="repeat" description="LRR 2">
    <location>
        <begin position="118"/>
        <end position="139"/>
    </location>
</feature>
<feature type="repeat" description="LRR 3">
    <location>
        <begin position="142"/>
        <end position="165"/>
    </location>
</feature>
<feature type="repeat" description="LRR 4">
    <location>
        <begin position="166"/>
        <end position="188"/>
    </location>
</feature>
<feature type="repeat" description="LRR 5">
    <location>
        <begin position="189"/>
        <end position="198"/>
    </location>
</feature>
<feature type="domain" description="Protein kinase" evidence="5">
    <location>
        <begin position="337"/>
        <end position="608"/>
    </location>
</feature>
<feature type="region of interest" description="Disordered" evidence="6">
    <location>
        <begin position="612"/>
        <end position="638"/>
    </location>
</feature>
<feature type="compositionally biased region" description="Basic and acidic residues" evidence="6">
    <location>
        <begin position="613"/>
        <end position="625"/>
    </location>
</feature>
<feature type="compositionally biased region" description="Polar residues" evidence="6">
    <location>
        <begin position="627"/>
        <end position="638"/>
    </location>
</feature>
<feature type="binding site" evidence="5">
    <location>
        <begin position="343"/>
        <end position="351"/>
    </location>
    <ligand>
        <name>ATP</name>
        <dbReference type="ChEBI" id="CHEBI:30616"/>
    </ligand>
</feature>
<feature type="binding site" evidence="5">
    <location>
        <position position="365"/>
    </location>
    <ligand>
        <name>ATP</name>
        <dbReference type="ChEBI" id="CHEBI:30616"/>
    </ligand>
</feature>
<feature type="modified residue" description="Phosphoserine" evidence="2">
    <location>
        <position position="339"/>
    </location>
</feature>
<feature type="modified residue" description="Phosphothreonine" evidence="2">
    <location>
        <position position="360"/>
    </location>
</feature>
<feature type="modified residue" description="Phosphoserine" evidence="1">
    <location>
        <position position="416"/>
    </location>
</feature>
<feature type="modified residue" description="Phosphoserine" evidence="3">
    <location>
        <position position="419"/>
    </location>
</feature>
<feature type="modified residue" description="Phosphothreonine" evidence="1">
    <location>
        <position position="436"/>
    </location>
</feature>
<feature type="modified residue" description="Phosphothreonine" evidence="1">
    <location>
        <position position="509"/>
    </location>
</feature>
<feature type="modified residue" description="Phosphoserine" evidence="1">
    <location>
        <position position="513"/>
    </location>
</feature>
<proteinExistence type="evidence at protein level"/>
<reference key="1">
    <citation type="journal article" date="1999" name="Nature">
        <title>Sequence and analysis of chromosome 4 of the plant Arabidopsis thaliana.</title>
        <authorList>
            <person name="Mayer K.F.X."/>
            <person name="Schueller C."/>
            <person name="Wambutt R."/>
            <person name="Murphy G."/>
            <person name="Volckaert G."/>
            <person name="Pohl T."/>
            <person name="Duesterhoeft A."/>
            <person name="Stiekema W."/>
            <person name="Entian K.-D."/>
            <person name="Terryn N."/>
            <person name="Harris B."/>
            <person name="Ansorge W."/>
            <person name="Brandt P."/>
            <person name="Grivell L.A."/>
            <person name="Rieger M."/>
            <person name="Weichselgartner M."/>
            <person name="de Simone V."/>
            <person name="Obermaier B."/>
            <person name="Mache R."/>
            <person name="Mueller M."/>
            <person name="Kreis M."/>
            <person name="Delseny M."/>
            <person name="Puigdomenech P."/>
            <person name="Watson M."/>
            <person name="Schmidtheini T."/>
            <person name="Reichert B."/>
            <person name="Portetelle D."/>
            <person name="Perez-Alonso M."/>
            <person name="Boutry M."/>
            <person name="Bancroft I."/>
            <person name="Vos P."/>
            <person name="Hoheisel J."/>
            <person name="Zimmermann W."/>
            <person name="Wedler H."/>
            <person name="Ridley P."/>
            <person name="Langham S.-A."/>
            <person name="McCullagh B."/>
            <person name="Bilham L."/>
            <person name="Robben J."/>
            <person name="van der Schueren J."/>
            <person name="Grymonprez B."/>
            <person name="Chuang Y.-J."/>
            <person name="Vandenbussche F."/>
            <person name="Braeken M."/>
            <person name="Weltjens I."/>
            <person name="Voet M."/>
            <person name="Bastiaens I."/>
            <person name="Aert R."/>
            <person name="Defoor E."/>
            <person name="Weitzenegger T."/>
            <person name="Bothe G."/>
            <person name="Ramsperger U."/>
            <person name="Hilbert H."/>
            <person name="Braun M."/>
            <person name="Holzer E."/>
            <person name="Brandt A."/>
            <person name="Peters S."/>
            <person name="van Staveren M."/>
            <person name="Dirkse W."/>
            <person name="Mooijman P."/>
            <person name="Klein Lankhorst R."/>
            <person name="Rose M."/>
            <person name="Hauf J."/>
            <person name="Koetter P."/>
            <person name="Berneiser S."/>
            <person name="Hempel S."/>
            <person name="Feldpausch M."/>
            <person name="Lamberth S."/>
            <person name="Van den Daele H."/>
            <person name="De Keyser A."/>
            <person name="Buysshaert C."/>
            <person name="Gielen J."/>
            <person name="Villarroel R."/>
            <person name="De Clercq R."/>
            <person name="van Montagu M."/>
            <person name="Rogers J."/>
            <person name="Cronin A."/>
            <person name="Quail M.A."/>
            <person name="Bray-Allen S."/>
            <person name="Clark L."/>
            <person name="Doggett J."/>
            <person name="Hall S."/>
            <person name="Kay M."/>
            <person name="Lennard N."/>
            <person name="McLay K."/>
            <person name="Mayes R."/>
            <person name="Pettett A."/>
            <person name="Rajandream M.A."/>
            <person name="Lyne M."/>
            <person name="Benes V."/>
            <person name="Rechmann S."/>
            <person name="Borkova D."/>
            <person name="Bloecker H."/>
            <person name="Scharfe M."/>
            <person name="Grimm M."/>
            <person name="Loehnert T.-H."/>
            <person name="Dose S."/>
            <person name="de Haan M."/>
            <person name="Maarse A.C."/>
            <person name="Schaefer M."/>
            <person name="Mueller-Auer S."/>
            <person name="Gabel C."/>
            <person name="Fuchs M."/>
            <person name="Fartmann B."/>
            <person name="Granderath K."/>
            <person name="Dauner D."/>
            <person name="Herzl A."/>
            <person name="Neumann S."/>
            <person name="Argiriou A."/>
            <person name="Vitale D."/>
            <person name="Liguori R."/>
            <person name="Piravandi E."/>
            <person name="Massenet O."/>
            <person name="Quigley F."/>
            <person name="Clabauld G."/>
            <person name="Muendlein A."/>
            <person name="Felber R."/>
            <person name="Schnabl S."/>
            <person name="Hiller R."/>
            <person name="Schmidt W."/>
            <person name="Lecharny A."/>
            <person name="Aubourg S."/>
            <person name="Chefdor F."/>
            <person name="Cooke R."/>
            <person name="Berger C."/>
            <person name="Monfort A."/>
            <person name="Casacuberta E."/>
            <person name="Gibbons T."/>
            <person name="Weber N."/>
            <person name="Vandenbol M."/>
            <person name="Bargues M."/>
            <person name="Terol J."/>
            <person name="Torres A."/>
            <person name="Perez-Perez A."/>
            <person name="Purnelle B."/>
            <person name="Bent E."/>
            <person name="Johnson S."/>
            <person name="Tacon D."/>
            <person name="Jesse T."/>
            <person name="Heijnen L."/>
            <person name="Schwarz S."/>
            <person name="Scholler P."/>
            <person name="Heber S."/>
            <person name="Francs P."/>
            <person name="Bielke C."/>
            <person name="Frishman D."/>
            <person name="Haase D."/>
            <person name="Lemcke K."/>
            <person name="Mewes H.-W."/>
            <person name="Stocker S."/>
            <person name="Zaccaria P."/>
            <person name="Bevan M."/>
            <person name="Wilson R.K."/>
            <person name="de la Bastide M."/>
            <person name="Habermann K."/>
            <person name="Parnell L."/>
            <person name="Dedhia N."/>
            <person name="Gnoj L."/>
            <person name="Schutz K."/>
            <person name="Huang E."/>
            <person name="Spiegel L."/>
            <person name="Sekhon M."/>
            <person name="Murray J."/>
            <person name="Sheet P."/>
            <person name="Cordes M."/>
            <person name="Abu-Threideh J."/>
            <person name="Stoneking T."/>
            <person name="Kalicki J."/>
            <person name="Graves T."/>
            <person name="Harmon G."/>
            <person name="Edwards J."/>
            <person name="Latreille P."/>
            <person name="Courtney L."/>
            <person name="Cloud J."/>
            <person name="Abbott A."/>
            <person name="Scott K."/>
            <person name="Johnson D."/>
            <person name="Minx P."/>
            <person name="Bentley D."/>
            <person name="Fulton B."/>
            <person name="Miller N."/>
            <person name="Greco T."/>
            <person name="Kemp K."/>
            <person name="Kramer J."/>
            <person name="Fulton L."/>
            <person name="Mardis E."/>
            <person name="Dante M."/>
            <person name="Pepin K."/>
            <person name="Hillier L.W."/>
            <person name="Nelson J."/>
            <person name="Spieth J."/>
            <person name="Ryan E."/>
            <person name="Andrews S."/>
            <person name="Geisel C."/>
            <person name="Layman D."/>
            <person name="Du H."/>
            <person name="Ali J."/>
            <person name="Berghoff A."/>
            <person name="Jones K."/>
            <person name="Drone K."/>
            <person name="Cotton M."/>
            <person name="Joshu C."/>
            <person name="Antonoiu B."/>
            <person name="Zidanic M."/>
            <person name="Strong C."/>
            <person name="Sun H."/>
            <person name="Lamar B."/>
            <person name="Yordan C."/>
            <person name="Ma P."/>
            <person name="Zhong J."/>
            <person name="Preston R."/>
            <person name="Vil D."/>
            <person name="Shekher M."/>
            <person name="Matero A."/>
            <person name="Shah R."/>
            <person name="Swaby I.K."/>
            <person name="O'Shaughnessy A."/>
            <person name="Rodriguez M."/>
            <person name="Hoffman J."/>
            <person name="Till S."/>
            <person name="Granat S."/>
            <person name="Shohdy N."/>
            <person name="Hasegawa A."/>
            <person name="Hameed A."/>
            <person name="Lodhi M."/>
            <person name="Johnson A."/>
            <person name="Chen E."/>
            <person name="Marra M.A."/>
            <person name="Martienssen R."/>
            <person name="McCombie W.R."/>
        </authorList>
    </citation>
    <scope>NUCLEOTIDE SEQUENCE [LARGE SCALE GENOMIC DNA]</scope>
    <source>
        <strain>cv. Columbia</strain>
    </source>
</reference>
<reference key="2">
    <citation type="journal article" date="2017" name="Plant J.">
        <title>Araport11: a complete reannotation of the Arabidopsis thaliana reference genome.</title>
        <authorList>
            <person name="Cheng C.Y."/>
            <person name="Krishnakumar V."/>
            <person name="Chan A.P."/>
            <person name="Thibaud-Nissen F."/>
            <person name="Schobel S."/>
            <person name="Town C.D."/>
        </authorList>
    </citation>
    <scope>GENOME REANNOTATION</scope>
    <source>
        <strain>cv. Columbia</strain>
    </source>
</reference>
<reference key="3">
    <citation type="journal article" date="2003" name="Science">
        <title>Empirical analysis of transcriptional activity in the Arabidopsis genome.</title>
        <authorList>
            <person name="Yamada K."/>
            <person name="Lim J."/>
            <person name="Dale J.M."/>
            <person name="Chen H."/>
            <person name="Shinn P."/>
            <person name="Palm C.J."/>
            <person name="Southwick A.M."/>
            <person name="Wu H.C."/>
            <person name="Kim C.J."/>
            <person name="Nguyen M."/>
            <person name="Pham P.K."/>
            <person name="Cheuk R.F."/>
            <person name="Karlin-Newmann G."/>
            <person name="Liu S.X."/>
            <person name="Lam B."/>
            <person name="Sakano H."/>
            <person name="Wu T."/>
            <person name="Yu G."/>
            <person name="Miranda M."/>
            <person name="Quach H.L."/>
            <person name="Tripp M."/>
            <person name="Chang C.H."/>
            <person name="Lee J.M."/>
            <person name="Toriumi M.J."/>
            <person name="Chan M.M."/>
            <person name="Tang C.C."/>
            <person name="Onodera C.S."/>
            <person name="Deng J.M."/>
            <person name="Akiyama K."/>
            <person name="Ansari Y."/>
            <person name="Arakawa T."/>
            <person name="Banh J."/>
            <person name="Banno F."/>
            <person name="Bowser L."/>
            <person name="Brooks S.Y."/>
            <person name="Carninci P."/>
            <person name="Chao Q."/>
            <person name="Choy N."/>
            <person name="Enju A."/>
            <person name="Goldsmith A.D."/>
            <person name="Gurjal M."/>
            <person name="Hansen N.F."/>
            <person name="Hayashizaki Y."/>
            <person name="Johnson-Hopson C."/>
            <person name="Hsuan V.W."/>
            <person name="Iida K."/>
            <person name="Karnes M."/>
            <person name="Khan S."/>
            <person name="Koesema E."/>
            <person name="Ishida J."/>
            <person name="Jiang P.X."/>
            <person name="Jones T."/>
            <person name="Kawai J."/>
            <person name="Kamiya A."/>
            <person name="Meyers C."/>
            <person name="Nakajima M."/>
            <person name="Narusaka M."/>
            <person name="Seki M."/>
            <person name="Sakurai T."/>
            <person name="Satou M."/>
            <person name="Tamse R."/>
            <person name="Vaysberg M."/>
            <person name="Wallender E.K."/>
            <person name="Wong C."/>
            <person name="Yamamura Y."/>
            <person name="Yuan S."/>
            <person name="Shinozaki K."/>
            <person name="Davis R.W."/>
            <person name="Theologis A."/>
            <person name="Ecker J.R."/>
        </authorList>
    </citation>
    <scope>NUCLEOTIDE SEQUENCE [LARGE SCALE MRNA]</scope>
    <source>
        <strain>cv. Columbia</strain>
    </source>
</reference>
<reference key="4">
    <citation type="journal article" date="2002" name="Science">
        <title>Functional annotation of a full-length Arabidopsis cDNA collection.</title>
        <authorList>
            <person name="Seki M."/>
            <person name="Narusaka M."/>
            <person name="Kamiya A."/>
            <person name="Ishida J."/>
            <person name="Satou M."/>
            <person name="Sakurai T."/>
            <person name="Nakajima M."/>
            <person name="Enju A."/>
            <person name="Akiyama K."/>
            <person name="Oono Y."/>
            <person name="Muramatsu M."/>
            <person name="Hayashizaki Y."/>
            <person name="Kawai J."/>
            <person name="Carninci P."/>
            <person name="Itoh M."/>
            <person name="Ishii Y."/>
            <person name="Arakawa T."/>
            <person name="Shibata K."/>
            <person name="Shinagawa A."/>
            <person name="Shinozaki K."/>
        </authorList>
    </citation>
    <scope>NUCLEOTIDE SEQUENCE [LARGE SCALE MRNA]</scope>
    <source>
        <strain>cv. Columbia</strain>
    </source>
</reference>